<proteinExistence type="inferred from homology"/>
<organism>
    <name type="scientific">Brucella melitensis biotype 1 (strain ATCC 23456 / CCUG 17765 / NCTC 10094 / 16M)</name>
    <dbReference type="NCBI Taxonomy" id="224914"/>
    <lineage>
        <taxon>Bacteria</taxon>
        <taxon>Pseudomonadati</taxon>
        <taxon>Pseudomonadota</taxon>
        <taxon>Alphaproteobacteria</taxon>
        <taxon>Hyphomicrobiales</taxon>
        <taxon>Brucellaceae</taxon>
        <taxon>Brucella/Ochrobactrum group</taxon>
        <taxon>Brucella</taxon>
    </lineage>
</organism>
<feature type="chain" id="PRO_0000206033" description="Cytochrome c oxidase assembly protein CtaG">
    <location>
        <begin position="1"/>
        <end position="201"/>
    </location>
</feature>
<feature type="topological domain" description="Cytoplasmic" evidence="2">
    <location>
        <begin position="1"/>
        <end position="12"/>
    </location>
</feature>
<feature type="transmembrane region" description="Helical; Signal-anchor for type II membrane protein" evidence="2">
    <location>
        <begin position="13"/>
        <end position="35"/>
    </location>
</feature>
<feature type="topological domain" description="Periplasmic" evidence="2">
    <location>
        <begin position="36"/>
        <end position="201"/>
    </location>
</feature>
<sequence>MTDQGENEKKQRRSNATIAVACLSFFVCMIGAAYASVPLYRIFCQVTGYGGTTQRVEQYSDTILDKTIKVRFDANIANGLPWDFKPMQREVTVRIGETTMIKYEAHNLFGEETYGRASFNVAPGRAGAYFNKVECFCFTDNTLKPGEDLELPVVFFVDPEFVNDPDLKDVKTITLSYTFFPIDKPKPVVNAKAVGSTRNGG</sequence>
<accession>Q8YFQ7</accession>
<gene>
    <name type="primary">ctaG</name>
    <name type="ordered locus">BMEI1463</name>
</gene>
<keyword id="KW-0997">Cell inner membrane</keyword>
<keyword id="KW-1003">Cell membrane</keyword>
<keyword id="KW-0186">Copper</keyword>
<keyword id="KW-0472">Membrane</keyword>
<keyword id="KW-0735">Signal-anchor</keyword>
<keyword id="KW-0812">Transmembrane</keyword>
<keyword id="KW-1133">Transmembrane helix</keyword>
<evidence type="ECO:0000250" key="1"/>
<evidence type="ECO:0000255" key="2"/>
<evidence type="ECO:0000305" key="3"/>
<dbReference type="EMBL" id="AE008917">
    <property type="protein sequence ID" value="AAL52644.1"/>
    <property type="status" value="ALT_INIT"/>
    <property type="molecule type" value="Genomic_DNA"/>
</dbReference>
<dbReference type="PIR" id="AI3434">
    <property type="entry name" value="AI3434"/>
</dbReference>
<dbReference type="RefSeq" id="WP_004683133.1">
    <property type="nucleotide sequence ID" value="NZ_GG703778.1"/>
</dbReference>
<dbReference type="SMR" id="Q8YFQ7"/>
<dbReference type="KEGG" id="bme:BMEI1463"/>
<dbReference type="KEGG" id="bmel:DK63_2024"/>
<dbReference type="PATRIC" id="fig|224914.52.peg.2126"/>
<dbReference type="eggNOG" id="COG3175">
    <property type="taxonomic scope" value="Bacteria"/>
</dbReference>
<dbReference type="PhylomeDB" id="Q8YFQ7"/>
<dbReference type="Proteomes" id="UP000000419">
    <property type="component" value="Chromosome I"/>
</dbReference>
<dbReference type="GO" id="GO:0005886">
    <property type="term" value="C:plasma membrane"/>
    <property type="evidence" value="ECO:0007669"/>
    <property type="project" value="UniProtKB-SubCell"/>
</dbReference>
<dbReference type="GO" id="GO:0005507">
    <property type="term" value="F:copper ion binding"/>
    <property type="evidence" value="ECO:0007669"/>
    <property type="project" value="InterPro"/>
</dbReference>
<dbReference type="GO" id="GO:0008535">
    <property type="term" value="P:respiratory chain complex IV assembly"/>
    <property type="evidence" value="ECO:0007669"/>
    <property type="project" value="UniProtKB-UniRule"/>
</dbReference>
<dbReference type="FunFam" id="2.60.370.10:FF:000001">
    <property type="entry name" value="COX11 cytochrome c oxidase assembly homolog"/>
    <property type="match status" value="1"/>
</dbReference>
<dbReference type="Gene3D" id="2.60.370.10">
    <property type="entry name" value="Ctag/Cox11"/>
    <property type="match status" value="1"/>
</dbReference>
<dbReference type="HAMAP" id="MF_00155">
    <property type="entry name" value="CtaG"/>
    <property type="match status" value="1"/>
</dbReference>
<dbReference type="InterPro" id="IPR023471">
    <property type="entry name" value="CtaG/Cox11_dom_sf"/>
</dbReference>
<dbReference type="InterPro" id="IPR007533">
    <property type="entry name" value="Cyt_c_oxidase_assmbl_CtaG"/>
</dbReference>
<dbReference type="NCBIfam" id="NF003465">
    <property type="entry name" value="PRK05089.1"/>
    <property type="match status" value="1"/>
</dbReference>
<dbReference type="PANTHER" id="PTHR21320:SF3">
    <property type="entry name" value="CYTOCHROME C OXIDASE ASSEMBLY PROTEIN COX11, MITOCHONDRIAL-RELATED"/>
    <property type="match status" value="1"/>
</dbReference>
<dbReference type="PANTHER" id="PTHR21320">
    <property type="entry name" value="CYTOCHROME C OXIDASE ASSEMBLY PROTEIN COX11-RELATED"/>
    <property type="match status" value="1"/>
</dbReference>
<dbReference type="Pfam" id="PF04442">
    <property type="entry name" value="CtaG_Cox11"/>
    <property type="match status" value="1"/>
</dbReference>
<dbReference type="PIRSF" id="PIRSF005413">
    <property type="entry name" value="COX11"/>
    <property type="match status" value="1"/>
</dbReference>
<dbReference type="SUPFAM" id="SSF110111">
    <property type="entry name" value="Ctag/Cox11"/>
    <property type="match status" value="1"/>
</dbReference>
<protein>
    <recommendedName>
        <fullName>Cytochrome c oxidase assembly protein CtaG</fullName>
    </recommendedName>
</protein>
<comment type="function">
    <text evidence="1">Exerts its effect at some terminal stage of cytochrome c oxidase synthesis, probably by being involved in the insertion of the copper B into subunit I.</text>
</comment>
<comment type="subcellular location">
    <subcellularLocation>
        <location evidence="3">Cell inner membrane</location>
        <topology evidence="3">Single-pass type II membrane protein</topology>
        <orientation evidence="3">Periplasmic side</orientation>
    </subcellularLocation>
</comment>
<comment type="similarity">
    <text evidence="3">Belongs to the COX11/CtaG family.</text>
</comment>
<comment type="sequence caution" evidence="3">
    <conflict type="erroneous initiation">
        <sequence resource="EMBL-CDS" id="AAL52644"/>
    </conflict>
</comment>
<name>COXZ_BRUME</name>
<reference key="1">
    <citation type="journal article" date="2002" name="Proc. Natl. Acad. Sci. U.S.A.">
        <title>The genome sequence of the facultative intracellular pathogen Brucella melitensis.</title>
        <authorList>
            <person name="DelVecchio V.G."/>
            <person name="Kapatral V."/>
            <person name="Redkar R.J."/>
            <person name="Patra G."/>
            <person name="Mujer C."/>
            <person name="Los T."/>
            <person name="Ivanova N."/>
            <person name="Anderson I."/>
            <person name="Bhattacharyya A."/>
            <person name="Lykidis A."/>
            <person name="Reznik G."/>
            <person name="Jablonski L."/>
            <person name="Larsen N."/>
            <person name="D'Souza M."/>
            <person name="Bernal A."/>
            <person name="Mazur M."/>
            <person name="Goltsman E."/>
            <person name="Selkov E."/>
            <person name="Elzer P.H."/>
            <person name="Hagius S."/>
            <person name="O'Callaghan D."/>
            <person name="Letesson J.-J."/>
            <person name="Haselkorn R."/>
            <person name="Kyrpides N.C."/>
            <person name="Overbeek R."/>
        </authorList>
    </citation>
    <scope>NUCLEOTIDE SEQUENCE [LARGE SCALE GENOMIC DNA]</scope>
    <source>
        <strain>ATCC 23456 / CCUG 17765 / NCTC 10094 / 16M</strain>
    </source>
</reference>